<keyword id="KW-0975">Bacterial flagellum</keyword>
<keyword id="KW-0998">Cell outer membrane</keyword>
<keyword id="KW-0449">Lipoprotein</keyword>
<keyword id="KW-0472">Membrane</keyword>
<keyword id="KW-0564">Palmitate</keyword>
<keyword id="KW-1185">Reference proteome</keyword>
<keyword id="KW-0732">Signal</keyword>
<organism>
    <name type="scientific">Nitratidesulfovibrio vulgaris (strain ATCC 29579 / DSM 644 / CCUG 34227 / NCIMB 8303 / VKM B-1760 / Hildenborough)</name>
    <name type="common">Desulfovibrio vulgaris</name>
    <dbReference type="NCBI Taxonomy" id="882"/>
    <lineage>
        <taxon>Bacteria</taxon>
        <taxon>Pseudomonadati</taxon>
        <taxon>Thermodesulfobacteriota</taxon>
        <taxon>Desulfovibrionia</taxon>
        <taxon>Desulfovibrionales</taxon>
        <taxon>Desulfovibrionaceae</taxon>
        <taxon>Nitratidesulfovibrio</taxon>
    </lineage>
</organism>
<gene>
    <name evidence="1" type="primary">flgH</name>
    <name type="ordered locus">DVU_0515</name>
</gene>
<sequence length="238" mass="25519">MIRKTLAASCAVLLMAGCNAARQQASPLPPVAPPQTYVEPEQAAANPGSMFNDAEADLMFSDSRARRVGDIVLVKIVENAKAKNKADTTSERDSTNNYTVGAYFGQDSASINPMNPVGAFGGKVGTNALLQTGSKSKLDGKGETKRENTVTATIAARVVRVMPGGLLQVEGARETRVNDETQYIVLSGLVRSRDVASDNSVMSTQLADSRIAYYGKGVLADKQRPGWFSRLMDNLWPF</sequence>
<reference key="1">
    <citation type="journal article" date="2004" name="Nat. Biotechnol.">
        <title>The genome sequence of the anaerobic, sulfate-reducing bacterium Desulfovibrio vulgaris Hildenborough.</title>
        <authorList>
            <person name="Heidelberg J.F."/>
            <person name="Seshadri R."/>
            <person name="Haveman S.A."/>
            <person name="Hemme C.L."/>
            <person name="Paulsen I.T."/>
            <person name="Kolonay J.F."/>
            <person name="Eisen J.A."/>
            <person name="Ward N.L."/>
            <person name="Methe B.A."/>
            <person name="Brinkac L.M."/>
            <person name="Daugherty S.C."/>
            <person name="DeBoy R.T."/>
            <person name="Dodson R.J."/>
            <person name="Durkin A.S."/>
            <person name="Madupu R."/>
            <person name="Nelson W.C."/>
            <person name="Sullivan S.A."/>
            <person name="Fouts D.E."/>
            <person name="Haft D.H."/>
            <person name="Selengut J."/>
            <person name="Peterson J.D."/>
            <person name="Davidsen T.M."/>
            <person name="Zafar N."/>
            <person name="Zhou L."/>
            <person name="Radune D."/>
            <person name="Dimitrov G."/>
            <person name="Hance M."/>
            <person name="Tran K."/>
            <person name="Khouri H.M."/>
            <person name="Gill J."/>
            <person name="Utterback T.R."/>
            <person name="Feldblyum T.V."/>
            <person name="Wall J.D."/>
            <person name="Voordouw G."/>
            <person name="Fraser C.M."/>
        </authorList>
    </citation>
    <scope>NUCLEOTIDE SEQUENCE [LARGE SCALE GENOMIC DNA]</scope>
    <source>
        <strain>ATCC 29579 / DSM 644 / CCUG 34227 / NCIMB 8303 / VKM B-1760 / Hildenborough</strain>
    </source>
</reference>
<evidence type="ECO:0000255" key="1">
    <source>
        <dbReference type="HAMAP-Rule" id="MF_00415"/>
    </source>
</evidence>
<accession>Q72EQ4</accession>
<comment type="function">
    <text evidence="1">Assembles around the rod to form the L-ring and probably protects the motor/basal body from shearing forces during rotation.</text>
</comment>
<comment type="subunit">
    <text evidence="1">The basal body constitutes a major portion of the flagellar organelle and consists of four rings (L,P,S, and M) mounted on a central rod.</text>
</comment>
<comment type="subcellular location">
    <subcellularLocation>
        <location evidence="1">Cell outer membrane</location>
        <topology evidence="1">Lipid-anchor</topology>
    </subcellularLocation>
    <subcellularLocation>
        <location evidence="1">Bacterial flagellum basal body</location>
    </subcellularLocation>
</comment>
<comment type="similarity">
    <text evidence="1">Belongs to the FlgH family.</text>
</comment>
<name>FLGH_NITV2</name>
<proteinExistence type="inferred from homology"/>
<protein>
    <recommendedName>
        <fullName evidence="1">Flagellar L-ring protein</fullName>
    </recommendedName>
    <alternativeName>
        <fullName evidence="1">Basal body L-ring protein</fullName>
    </alternativeName>
</protein>
<dbReference type="EMBL" id="AE017285">
    <property type="protein sequence ID" value="AAS94997.1"/>
    <property type="molecule type" value="Genomic_DNA"/>
</dbReference>
<dbReference type="RefSeq" id="WP_010937821.1">
    <property type="nucleotide sequence ID" value="NC_002937.3"/>
</dbReference>
<dbReference type="RefSeq" id="YP_009738.1">
    <property type="nucleotide sequence ID" value="NC_002937.3"/>
</dbReference>
<dbReference type="SMR" id="Q72EQ4"/>
<dbReference type="STRING" id="882.DVU_0515"/>
<dbReference type="PaxDb" id="882-DVU_0515"/>
<dbReference type="EnsemblBacteria" id="AAS94997">
    <property type="protein sequence ID" value="AAS94997"/>
    <property type="gene ID" value="DVU_0515"/>
</dbReference>
<dbReference type="KEGG" id="dvu:DVU_0515"/>
<dbReference type="PATRIC" id="fig|882.5.peg.492"/>
<dbReference type="eggNOG" id="COG2063">
    <property type="taxonomic scope" value="Bacteria"/>
</dbReference>
<dbReference type="HOGENOM" id="CLU_069313_1_1_7"/>
<dbReference type="OrthoDB" id="9789227at2"/>
<dbReference type="PhylomeDB" id="Q72EQ4"/>
<dbReference type="Proteomes" id="UP000002194">
    <property type="component" value="Chromosome"/>
</dbReference>
<dbReference type="GO" id="GO:0009427">
    <property type="term" value="C:bacterial-type flagellum basal body, distal rod, L ring"/>
    <property type="evidence" value="ECO:0007669"/>
    <property type="project" value="InterPro"/>
</dbReference>
<dbReference type="GO" id="GO:0009279">
    <property type="term" value="C:cell outer membrane"/>
    <property type="evidence" value="ECO:0007669"/>
    <property type="project" value="UniProtKB-SubCell"/>
</dbReference>
<dbReference type="GO" id="GO:0003774">
    <property type="term" value="F:cytoskeletal motor activity"/>
    <property type="evidence" value="ECO:0007669"/>
    <property type="project" value="InterPro"/>
</dbReference>
<dbReference type="GO" id="GO:0071973">
    <property type="term" value="P:bacterial-type flagellum-dependent cell motility"/>
    <property type="evidence" value="ECO:0007669"/>
    <property type="project" value="InterPro"/>
</dbReference>
<dbReference type="HAMAP" id="MF_00415">
    <property type="entry name" value="FlgH"/>
    <property type="match status" value="1"/>
</dbReference>
<dbReference type="InterPro" id="IPR000527">
    <property type="entry name" value="Flag_Lring"/>
</dbReference>
<dbReference type="NCBIfam" id="NF009336">
    <property type="entry name" value="PRK12696.1"/>
    <property type="match status" value="1"/>
</dbReference>
<dbReference type="PANTHER" id="PTHR34933">
    <property type="entry name" value="FLAGELLAR L-RING PROTEIN"/>
    <property type="match status" value="1"/>
</dbReference>
<dbReference type="PANTHER" id="PTHR34933:SF1">
    <property type="entry name" value="FLAGELLAR L-RING PROTEIN"/>
    <property type="match status" value="1"/>
</dbReference>
<dbReference type="Pfam" id="PF02107">
    <property type="entry name" value="FlgH"/>
    <property type="match status" value="1"/>
</dbReference>
<dbReference type="PRINTS" id="PR01008">
    <property type="entry name" value="FLGLRINGFLGH"/>
</dbReference>
<dbReference type="PROSITE" id="PS51257">
    <property type="entry name" value="PROKAR_LIPOPROTEIN"/>
    <property type="match status" value="1"/>
</dbReference>
<feature type="signal peptide" evidence="1">
    <location>
        <begin position="1"/>
        <end position="17"/>
    </location>
</feature>
<feature type="chain" id="PRO_0000009442" description="Flagellar L-ring protein">
    <location>
        <begin position="18"/>
        <end position="238"/>
    </location>
</feature>
<feature type="lipid moiety-binding region" description="N-palmitoyl cysteine" evidence="1">
    <location>
        <position position="18"/>
    </location>
</feature>
<feature type="lipid moiety-binding region" description="S-diacylglycerol cysteine" evidence="1">
    <location>
        <position position="18"/>
    </location>
</feature>